<dbReference type="EC" id="7.1.2.2" evidence="1"/>
<dbReference type="EMBL" id="AE002098">
    <property type="protein sequence ID" value="AAF42263.1"/>
    <property type="molecule type" value="Genomic_DNA"/>
</dbReference>
<dbReference type="PIR" id="G81024">
    <property type="entry name" value="G81024"/>
</dbReference>
<dbReference type="RefSeq" id="NP_274928.1">
    <property type="nucleotide sequence ID" value="NC_003112.2"/>
</dbReference>
<dbReference type="RefSeq" id="WP_002219871.1">
    <property type="nucleotide sequence ID" value="NC_003112.2"/>
</dbReference>
<dbReference type="SMR" id="Q9JXQ2"/>
<dbReference type="FunCoup" id="Q9JXQ2">
    <property type="interactions" value="384"/>
</dbReference>
<dbReference type="STRING" id="122586.NMB1934"/>
<dbReference type="PaxDb" id="122586-NMB1934"/>
<dbReference type="KEGG" id="nme:NMB1934"/>
<dbReference type="PATRIC" id="fig|122586.8.peg.2462"/>
<dbReference type="HOGENOM" id="CLU_022398_0_2_4"/>
<dbReference type="InParanoid" id="Q9JXQ2"/>
<dbReference type="OrthoDB" id="9801639at2"/>
<dbReference type="Proteomes" id="UP000000425">
    <property type="component" value="Chromosome"/>
</dbReference>
<dbReference type="GO" id="GO:0005886">
    <property type="term" value="C:plasma membrane"/>
    <property type="evidence" value="ECO:0007669"/>
    <property type="project" value="UniProtKB-SubCell"/>
</dbReference>
<dbReference type="GO" id="GO:0045259">
    <property type="term" value="C:proton-transporting ATP synthase complex"/>
    <property type="evidence" value="ECO:0007669"/>
    <property type="project" value="UniProtKB-KW"/>
</dbReference>
<dbReference type="GO" id="GO:0005524">
    <property type="term" value="F:ATP binding"/>
    <property type="evidence" value="ECO:0007669"/>
    <property type="project" value="UniProtKB-UniRule"/>
</dbReference>
<dbReference type="GO" id="GO:0016887">
    <property type="term" value="F:ATP hydrolysis activity"/>
    <property type="evidence" value="ECO:0007669"/>
    <property type="project" value="InterPro"/>
</dbReference>
<dbReference type="GO" id="GO:0046933">
    <property type="term" value="F:proton-transporting ATP synthase activity, rotational mechanism"/>
    <property type="evidence" value="ECO:0007669"/>
    <property type="project" value="UniProtKB-UniRule"/>
</dbReference>
<dbReference type="CDD" id="cd18110">
    <property type="entry name" value="ATP-synt_F1_beta_C"/>
    <property type="match status" value="1"/>
</dbReference>
<dbReference type="CDD" id="cd18115">
    <property type="entry name" value="ATP-synt_F1_beta_N"/>
    <property type="match status" value="1"/>
</dbReference>
<dbReference type="CDD" id="cd01133">
    <property type="entry name" value="F1-ATPase_beta_CD"/>
    <property type="match status" value="1"/>
</dbReference>
<dbReference type="FunFam" id="1.10.1140.10:FF:000001">
    <property type="entry name" value="ATP synthase subunit beta"/>
    <property type="match status" value="1"/>
</dbReference>
<dbReference type="FunFam" id="2.40.10.170:FF:000003">
    <property type="entry name" value="ATP synthase subunit beta"/>
    <property type="match status" value="1"/>
</dbReference>
<dbReference type="FunFam" id="3.40.50.300:FF:000004">
    <property type="entry name" value="ATP synthase subunit beta"/>
    <property type="match status" value="1"/>
</dbReference>
<dbReference type="Gene3D" id="2.40.10.170">
    <property type="match status" value="1"/>
</dbReference>
<dbReference type="Gene3D" id="1.10.1140.10">
    <property type="entry name" value="Bovine Mitochondrial F1-atpase, Atp Synthase Beta Chain, Chain D, domain 3"/>
    <property type="match status" value="1"/>
</dbReference>
<dbReference type="Gene3D" id="3.40.50.300">
    <property type="entry name" value="P-loop containing nucleotide triphosphate hydrolases"/>
    <property type="match status" value="1"/>
</dbReference>
<dbReference type="HAMAP" id="MF_01347">
    <property type="entry name" value="ATP_synth_beta_bact"/>
    <property type="match status" value="1"/>
</dbReference>
<dbReference type="InterPro" id="IPR003593">
    <property type="entry name" value="AAA+_ATPase"/>
</dbReference>
<dbReference type="InterPro" id="IPR055190">
    <property type="entry name" value="ATP-synt_VA_C"/>
</dbReference>
<dbReference type="InterPro" id="IPR005722">
    <property type="entry name" value="ATP_synth_F1_bsu"/>
</dbReference>
<dbReference type="InterPro" id="IPR020003">
    <property type="entry name" value="ATPase_a/bsu_AS"/>
</dbReference>
<dbReference type="InterPro" id="IPR050053">
    <property type="entry name" value="ATPase_alpha/beta_chains"/>
</dbReference>
<dbReference type="InterPro" id="IPR004100">
    <property type="entry name" value="ATPase_F1/V1/A1_a/bsu_N"/>
</dbReference>
<dbReference type="InterPro" id="IPR036121">
    <property type="entry name" value="ATPase_F1/V1/A1_a/bsu_N_sf"/>
</dbReference>
<dbReference type="InterPro" id="IPR000194">
    <property type="entry name" value="ATPase_F1/V1/A1_a/bsu_nucl-bd"/>
</dbReference>
<dbReference type="InterPro" id="IPR024034">
    <property type="entry name" value="ATPase_F1/V1_b/a_C"/>
</dbReference>
<dbReference type="InterPro" id="IPR027417">
    <property type="entry name" value="P-loop_NTPase"/>
</dbReference>
<dbReference type="NCBIfam" id="TIGR01039">
    <property type="entry name" value="atpD"/>
    <property type="match status" value="1"/>
</dbReference>
<dbReference type="PANTHER" id="PTHR15184">
    <property type="entry name" value="ATP SYNTHASE"/>
    <property type="match status" value="1"/>
</dbReference>
<dbReference type="PANTHER" id="PTHR15184:SF71">
    <property type="entry name" value="ATP SYNTHASE SUBUNIT BETA, MITOCHONDRIAL"/>
    <property type="match status" value="1"/>
</dbReference>
<dbReference type="Pfam" id="PF00006">
    <property type="entry name" value="ATP-synt_ab"/>
    <property type="match status" value="1"/>
</dbReference>
<dbReference type="Pfam" id="PF02874">
    <property type="entry name" value="ATP-synt_ab_N"/>
    <property type="match status" value="1"/>
</dbReference>
<dbReference type="Pfam" id="PF22919">
    <property type="entry name" value="ATP-synt_VA_C"/>
    <property type="match status" value="1"/>
</dbReference>
<dbReference type="SMART" id="SM00382">
    <property type="entry name" value="AAA"/>
    <property type="match status" value="1"/>
</dbReference>
<dbReference type="SUPFAM" id="SSF47917">
    <property type="entry name" value="C-terminal domain of alpha and beta subunits of F1 ATP synthase"/>
    <property type="match status" value="1"/>
</dbReference>
<dbReference type="SUPFAM" id="SSF50615">
    <property type="entry name" value="N-terminal domain of alpha and beta subunits of F1 ATP synthase"/>
    <property type="match status" value="1"/>
</dbReference>
<dbReference type="SUPFAM" id="SSF52540">
    <property type="entry name" value="P-loop containing nucleoside triphosphate hydrolases"/>
    <property type="match status" value="1"/>
</dbReference>
<dbReference type="PROSITE" id="PS00152">
    <property type="entry name" value="ATPASE_ALPHA_BETA"/>
    <property type="match status" value="1"/>
</dbReference>
<protein>
    <recommendedName>
        <fullName evidence="1">ATP synthase subunit beta</fullName>
        <ecNumber evidence="1">7.1.2.2</ecNumber>
    </recommendedName>
    <alternativeName>
        <fullName evidence="1">ATP synthase F1 sector subunit beta</fullName>
    </alternativeName>
    <alternativeName>
        <fullName evidence="1">F-ATPase subunit beta</fullName>
    </alternativeName>
</protein>
<comment type="function">
    <text evidence="1">Produces ATP from ADP in the presence of a proton gradient across the membrane. The catalytic sites are hosted primarily by the beta subunits.</text>
</comment>
<comment type="catalytic activity">
    <reaction evidence="1">
        <text>ATP + H2O + 4 H(+)(in) = ADP + phosphate + 5 H(+)(out)</text>
        <dbReference type="Rhea" id="RHEA:57720"/>
        <dbReference type="ChEBI" id="CHEBI:15377"/>
        <dbReference type="ChEBI" id="CHEBI:15378"/>
        <dbReference type="ChEBI" id="CHEBI:30616"/>
        <dbReference type="ChEBI" id="CHEBI:43474"/>
        <dbReference type="ChEBI" id="CHEBI:456216"/>
        <dbReference type="EC" id="7.1.2.2"/>
    </reaction>
</comment>
<comment type="subunit">
    <text evidence="1">F-type ATPases have 2 components, CF(1) - the catalytic core - and CF(0) - the membrane proton channel. CF(1) has five subunits: alpha(3), beta(3), gamma(1), delta(1), epsilon(1). CF(0) has three main subunits: a(1), b(2) and c(9-12). The alpha and beta chains form an alternating ring which encloses part of the gamma chain. CF(1) is attached to CF(0) by a central stalk formed by the gamma and epsilon chains, while a peripheral stalk is formed by the delta and b chains.</text>
</comment>
<comment type="subcellular location">
    <subcellularLocation>
        <location evidence="1">Cell inner membrane</location>
        <topology evidence="1">Peripheral membrane protein</topology>
    </subcellularLocation>
</comment>
<comment type="similarity">
    <text evidence="1">Belongs to the ATPase alpha/beta chains family.</text>
</comment>
<sequence length="465" mass="50391">MSQGKIVQIIGAVVDVEFPRDMIPRVYDALKLDENGLTLEVQQLLGDGVVRAIAMGSSDGLKRGMTVSNTGAPITVPVGKGTLGRIVDVLGTPVDEAGPIDTDKSRAIHQAAPKFDELSSTTELLETGIKVIDLLCPFAKGGKVGLFGGAGVGKTVNMMELINNIAKAHSGLSVFAGVGERTREGNDFYHEMKDSNVLDKVAMVYGQMNEPPGNRLRVALTGLTMAEYFRDEKDENGKGRDVLFFVDNIYRYTLAGTEVSALLGRMPSAVGYQPTLAEEMGRLQERITSTQTGSITSIQAVYVPADDLTDPSPATTFAHLDATVVLSRDIASLGIYPAVDPLDSTSRQLDPMVLGQEHYDVARGVQSTLQKYKELRDIIAILGMDELSDEDKLTVMRARKIQRFLSQPFHVAEVFTGSPGKYVALRDTIAGFKAILNGEYDHLPEQAFYMVGSIEEAVEKAKTLN</sequence>
<feature type="chain" id="PRO_0000254313" description="ATP synthase subunit beta">
    <location>
        <begin position="1"/>
        <end position="465"/>
    </location>
</feature>
<feature type="binding site" evidence="1">
    <location>
        <begin position="148"/>
        <end position="155"/>
    </location>
    <ligand>
        <name>ATP</name>
        <dbReference type="ChEBI" id="CHEBI:30616"/>
    </ligand>
</feature>
<organism>
    <name type="scientific">Neisseria meningitidis serogroup B (strain ATCC BAA-335 / MC58)</name>
    <dbReference type="NCBI Taxonomy" id="122586"/>
    <lineage>
        <taxon>Bacteria</taxon>
        <taxon>Pseudomonadati</taxon>
        <taxon>Pseudomonadota</taxon>
        <taxon>Betaproteobacteria</taxon>
        <taxon>Neisseriales</taxon>
        <taxon>Neisseriaceae</taxon>
        <taxon>Neisseria</taxon>
    </lineage>
</organism>
<accession>Q9JXQ2</accession>
<gene>
    <name evidence="1" type="primary">atpD</name>
    <name type="ordered locus">NMB1934</name>
</gene>
<keyword id="KW-0066">ATP synthesis</keyword>
<keyword id="KW-0067">ATP-binding</keyword>
<keyword id="KW-0997">Cell inner membrane</keyword>
<keyword id="KW-1003">Cell membrane</keyword>
<keyword id="KW-0139">CF(1)</keyword>
<keyword id="KW-0375">Hydrogen ion transport</keyword>
<keyword id="KW-0406">Ion transport</keyword>
<keyword id="KW-0472">Membrane</keyword>
<keyword id="KW-0547">Nucleotide-binding</keyword>
<keyword id="KW-1185">Reference proteome</keyword>
<keyword id="KW-1278">Translocase</keyword>
<keyword id="KW-0813">Transport</keyword>
<reference key="1">
    <citation type="journal article" date="2000" name="Science">
        <title>Complete genome sequence of Neisseria meningitidis serogroup B strain MC58.</title>
        <authorList>
            <person name="Tettelin H."/>
            <person name="Saunders N.J."/>
            <person name="Heidelberg J.F."/>
            <person name="Jeffries A.C."/>
            <person name="Nelson K.E."/>
            <person name="Eisen J.A."/>
            <person name="Ketchum K.A."/>
            <person name="Hood D.W."/>
            <person name="Peden J.F."/>
            <person name="Dodson R.J."/>
            <person name="Nelson W.C."/>
            <person name="Gwinn M.L."/>
            <person name="DeBoy R.T."/>
            <person name="Peterson J.D."/>
            <person name="Hickey E.K."/>
            <person name="Haft D.H."/>
            <person name="Salzberg S.L."/>
            <person name="White O."/>
            <person name="Fleischmann R.D."/>
            <person name="Dougherty B.A."/>
            <person name="Mason T.M."/>
            <person name="Ciecko A."/>
            <person name="Parksey D.S."/>
            <person name="Blair E."/>
            <person name="Cittone H."/>
            <person name="Clark E.B."/>
            <person name="Cotton M.D."/>
            <person name="Utterback T.R."/>
            <person name="Khouri H.M."/>
            <person name="Qin H."/>
            <person name="Vamathevan J.J."/>
            <person name="Gill J."/>
            <person name="Scarlato V."/>
            <person name="Masignani V."/>
            <person name="Pizza M."/>
            <person name="Grandi G."/>
            <person name="Sun L."/>
            <person name="Smith H.O."/>
            <person name="Fraser C.M."/>
            <person name="Moxon E.R."/>
            <person name="Rappuoli R."/>
            <person name="Venter J.C."/>
        </authorList>
    </citation>
    <scope>NUCLEOTIDE SEQUENCE [LARGE SCALE GENOMIC DNA]</scope>
    <source>
        <strain>ATCC BAA-335 / MC58</strain>
    </source>
</reference>
<evidence type="ECO:0000255" key="1">
    <source>
        <dbReference type="HAMAP-Rule" id="MF_01347"/>
    </source>
</evidence>
<proteinExistence type="inferred from homology"/>
<name>ATPB_NEIMB</name>